<dbReference type="EC" id="2.1.1.144" evidence="1"/>
<dbReference type="EMBL" id="CP000319">
    <property type="protein sequence ID" value="ABE63677.1"/>
    <property type="molecule type" value="Genomic_DNA"/>
</dbReference>
<dbReference type="RefSeq" id="WP_011511341.1">
    <property type="nucleotide sequence ID" value="NC_007964.1"/>
</dbReference>
<dbReference type="SMR" id="Q1QJC0"/>
<dbReference type="STRING" id="323097.Nham_2909"/>
<dbReference type="KEGG" id="nha:Nham_2909"/>
<dbReference type="eggNOG" id="COG4106">
    <property type="taxonomic scope" value="Bacteria"/>
</dbReference>
<dbReference type="HOGENOM" id="CLU_037990_5_2_5"/>
<dbReference type="OrthoDB" id="9795085at2"/>
<dbReference type="Proteomes" id="UP000001953">
    <property type="component" value="Chromosome"/>
</dbReference>
<dbReference type="GO" id="GO:0005737">
    <property type="term" value="C:cytoplasm"/>
    <property type="evidence" value="ECO:0007669"/>
    <property type="project" value="UniProtKB-SubCell"/>
</dbReference>
<dbReference type="GO" id="GO:0030798">
    <property type="term" value="F:trans-aconitate 2-methyltransferase activity"/>
    <property type="evidence" value="ECO:0007669"/>
    <property type="project" value="UniProtKB-UniRule"/>
</dbReference>
<dbReference type="GO" id="GO:0032259">
    <property type="term" value="P:methylation"/>
    <property type="evidence" value="ECO:0007669"/>
    <property type="project" value="UniProtKB-KW"/>
</dbReference>
<dbReference type="CDD" id="cd02440">
    <property type="entry name" value="AdoMet_MTases"/>
    <property type="match status" value="1"/>
</dbReference>
<dbReference type="Gene3D" id="1.10.150.290">
    <property type="entry name" value="S-adenosyl-L-methionine-dependent methyltransferases"/>
    <property type="match status" value="1"/>
</dbReference>
<dbReference type="Gene3D" id="3.40.50.150">
    <property type="entry name" value="Vaccinia Virus protein VP39"/>
    <property type="match status" value="1"/>
</dbReference>
<dbReference type="HAMAP" id="MF_00560">
    <property type="entry name" value="Tran_acon_Me_trans"/>
    <property type="match status" value="1"/>
</dbReference>
<dbReference type="InterPro" id="IPR041698">
    <property type="entry name" value="Methyltransf_25"/>
</dbReference>
<dbReference type="InterPro" id="IPR029063">
    <property type="entry name" value="SAM-dependent_MTases_sf"/>
</dbReference>
<dbReference type="InterPro" id="IPR023506">
    <property type="entry name" value="Trans-aconitate_MeTrfase"/>
</dbReference>
<dbReference type="InterPro" id="IPR023149">
    <property type="entry name" value="Trans_acon_MeTrfase_C"/>
</dbReference>
<dbReference type="NCBIfam" id="NF002463">
    <property type="entry name" value="PRK01683.1"/>
    <property type="match status" value="1"/>
</dbReference>
<dbReference type="PANTHER" id="PTHR43861:SF1">
    <property type="entry name" value="TRANS-ACONITATE 2-METHYLTRANSFERASE"/>
    <property type="match status" value="1"/>
</dbReference>
<dbReference type="PANTHER" id="PTHR43861">
    <property type="entry name" value="TRANS-ACONITATE 2-METHYLTRANSFERASE-RELATED"/>
    <property type="match status" value="1"/>
</dbReference>
<dbReference type="Pfam" id="PF13649">
    <property type="entry name" value="Methyltransf_25"/>
    <property type="match status" value="1"/>
</dbReference>
<dbReference type="SUPFAM" id="SSF53335">
    <property type="entry name" value="S-adenosyl-L-methionine-dependent methyltransferases"/>
    <property type="match status" value="1"/>
</dbReference>
<proteinExistence type="inferred from homology"/>
<gene>
    <name evidence="1" type="primary">tam</name>
    <name type="ordered locus">Nham_2909</name>
</gene>
<keyword id="KW-0963">Cytoplasm</keyword>
<keyword id="KW-0489">Methyltransferase</keyword>
<keyword id="KW-1185">Reference proteome</keyword>
<keyword id="KW-0949">S-adenosyl-L-methionine</keyword>
<keyword id="KW-0808">Transferase</keyword>
<sequence>MDDWSAEQYLKFEDERTRPSRDLLAQVPLSAPRKAVDIGCGPGNSTELLVERWPQAEIIGIDTSADMLRRARERLPGQTFIEANVAHWVPPANTDLLFANAIFQWVPEHLRQLQRLLGALPSGGVLAVQMPDNLDEPSHVMMREVAHSGPWRETLADAARAKDVLPRPGAYYDALRPLCQHIEIWHTIYNHVLADTAAIVEWVKGTGLRPFVDPLEPTERKEFLREYTARIAAAYPLQADGKVLLRFPRLFVVAIK</sequence>
<evidence type="ECO:0000255" key="1">
    <source>
        <dbReference type="HAMAP-Rule" id="MF_00560"/>
    </source>
</evidence>
<comment type="function">
    <text evidence="1">Catalyzes the S-adenosylmethionine monomethyl esterification of trans-aconitate.</text>
</comment>
<comment type="catalytic activity">
    <reaction evidence="1">
        <text>trans-aconitate + S-adenosyl-L-methionine = (E)-3-(methoxycarbonyl)pent-2-enedioate + S-adenosyl-L-homocysteine</text>
        <dbReference type="Rhea" id="RHEA:14969"/>
        <dbReference type="ChEBI" id="CHEBI:15708"/>
        <dbReference type="ChEBI" id="CHEBI:57470"/>
        <dbReference type="ChEBI" id="CHEBI:57856"/>
        <dbReference type="ChEBI" id="CHEBI:59789"/>
        <dbReference type="EC" id="2.1.1.144"/>
    </reaction>
</comment>
<comment type="subcellular location">
    <subcellularLocation>
        <location evidence="1">Cytoplasm</location>
    </subcellularLocation>
</comment>
<comment type="similarity">
    <text evidence="1">Belongs to the methyltransferase superfamily. Tam family.</text>
</comment>
<accession>Q1QJC0</accession>
<organism>
    <name type="scientific">Nitrobacter hamburgensis (strain DSM 10229 / NCIMB 13809 / X14)</name>
    <dbReference type="NCBI Taxonomy" id="323097"/>
    <lineage>
        <taxon>Bacteria</taxon>
        <taxon>Pseudomonadati</taxon>
        <taxon>Pseudomonadota</taxon>
        <taxon>Alphaproteobacteria</taxon>
        <taxon>Hyphomicrobiales</taxon>
        <taxon>Nitrobacteraceae</taxon>
        <taxon>Nitrobacter</taxon>
    </lineage>
</organism>
<feature type="chain" id="PRO_1000056568" description="Trans-aconitate 2-methyltransferase">
    <location>
        <begin position="1"/>
        <end position="256"/>
    </location>
</feature>
<name>TAM_NITHX</name>
<protein>
    <recommendedName>
        <fullName evidence="1">Trans-aconitate 2-methyltransferase</fullName>
        <ecNumber evidence="1">2.1.1.144</ecNumber>
    </recommendedName>
</protein>
<reference key="1">
    <citation type="submission" date="2006-03" db="EMBL/GenBank/DDBJ databases">
        <title>Complete sequence of chromosome of Nitrobacter hamburgensis X14.</title>
        <authorList>
            <consortium name="US DOE Joint Genome Institute"/>
            <person name="Copeland A."/>
            <person name="Lucas S."/>
            <person name="Lapidus A."/>
            <person name="Barry K."/>
            <person name="Detter J.C."/>
            <person name="Glavina del Rio T."/>
            <person name="Hammon N."/>
            <person name="Israni S."/>
            <person name="Dalin E."/>
            <person name="Tice H."/>
            <person name="Pitluck S."/>
            <person name="Chain P."/>
            <person name="Malfatti S."/>
            <person name="Shin M."/>
            <person name="Vergez L."/>
            <person name="Schmutz J."/>
            <person name="Larimer F."/>
            <person name="Land M."/>
            <person name="Hauser L."/>
            <person name="Kyrpides N."/>
            <person name="Ivanova N."/>
            <person name="Ward B."/>
            <person name="Arp D."/>
            <person name="Klotz M."/>
            <person name="Stein L."/>
            <person name="O'Mullan G."/>
            <person name="Starkenburg S."/>
            <person name="Sayavedra L."/>
            <person name="Poret-Peterson A.T."/>
            <person name="Gentry M.E."/>
            <person name="Bruce D."/>
            <person name="Richardson P."/>
        </authorList>
    </citation>
    <scope>NUCLEOTIDE SEQUENCE [LARGE SCALE GENOMIC DNA]</scope>
    <source>
        <strain>DSM 10229 / NCIMB 13809 / X14</strain>
    </source>
</reference>